<proteinExistence type="inferred from homology"/>
<comment type="catalytic activity">
    <reaction evidence="2">
        <text>oxaloacetate + acetyl-CoA + H2O = citrate + CoA + H(+)</text>
        <dbReference type="Rhea" id="RHEA:16845"/>
        <dbReference type="ChEBI" id="CHEBI:15377"/>
        <dbReference type="ChEBI" id="CHEBI:15378"/>
        <dbReference type="ChEBI" id="CHEBI:16452"/>
        <dbReference type="ChEBI" id="CHEBI:16947"/>
        <dbReference type="ChEBI" id="CHEBI:57287"/>
        <dbReference type="ChEBI" id="CHEBI:57288"/>
        <dbReference type="EC" id="2.3.3.16"/>
    </reaction>
</comment>
<comment type="pathway">
    <text>Carbohydrate metabolism; tricarboxylic acid cycle; isocitrate from oxaloacetate: step 1/2.</text>
</comment>
<comment type="subunit">
    <text evidence="1">Homohexamer.</text>
</comment>
<comment type="miscellaneous">
    <text>Citrate synthase is found in nearly all cells capable of oxidative metabolism.</text>
</comment>
<comment type="similarity">
    <text evidence="3">Belongs to the citrate synthase family.</text>
</comment>
<organism>
    <name type="scientific">Escherichia coli O6:H1 (strain CFT073 / ATCC 700928 / UPEC)</name>
    <dbReference type="NCBI Taxonomy" id="199310"/>
    <lineage>
        <taxon>Bacteria</taxon>
        <taxon>Pseudomonadati</taxon>
        <taxon>Pseudomonadota</taxon>
        <taxon>Gammaproteobacteria</taxon>
        <taxon>Enterobacterales</taxon>
        <taxon>Enterobacteriaceae</taxon>
        <taxon>Escherichia</taxon>
    </lineage>
</organism>
<evidence type="ECO:0000250" key="1"/>
<evidence type="ECO:0000255" key="2">
    <source>
        <dbReference type="PROSITE-ProRule" id="PRU10117"/>
    </source>
</evidence>
<evidence type="ECO:0000305" key="3"/>
<sequence length="427" mass="48015">MADTKAKLTLNGDTAVELDVLKGTLGQDVIDIRTLGSKGVFTFDPGFTSTASCESKITFIDGDEGILLHRGFPIDQLATDSNYLEVCYILLNGEKPTQEQYDEFKTTVTRHTMIHEQITRLFHAFRRDSHPMAVMCGITGALAAFYHDSLDVNNPRHREIAAFRLLSKMPTMAAMCYKYSIGQPFVYPRNDLSYAGNFLNMMFSTPCEPYEVNPILERAMDRILILHADHEQNASTSTVRTAGSSGANPFACIAAGIASLWGPAHGGANEAALKMLEEISSVKHIPEFVRRAKDKNDSFRLMGFGHRVYKNYDPRATVMRETCHEVLKELGTKDDLLEVAMELENIALNDPYFIEKKLYPNVDFYSGIILKAMGIPSSMFTVIFAMARTVGWIAHWSEMHSDGMKIARPRQLYTGYEKRDFKSDIKR</sequence>
<accession>P0ABH8</accession>
<accession>O32552</accession>
<accession>P00891</accession>
<accession>P78257</accession>
<reference key="1">
    <citation type="journal article" date="2002" name="Proc. Natl. Acad. Sci. U.S.A.">
        <title>Extensive mosaic structure revealed by the complete genome sequence of uropathogenic Escherichia coli.</title>
        <authorList>
            <person name="Welch R.A."/>
            <person name="Burland V."/>
            <person name="Plunkett G. III"/>
            <person name="Redford P."/>
            <person name="Roesch P."/>
            <person name="Rasko D."/>
            <person name="Buckles E.L."/>
            <person name="Liou S.-R."/>
            <person name="Boutin A."/>
            <person name="Hackett J."/>
            <person name="Stroud D."/>
            <person name="Mayhew G.F."/>
            <person name="Rose D.J."/>
            <person name="Zhou S."/>
            <person name="Schwartz D.C."/>
            <person name="Perna N.T."/>
            <person name="Mobley H.L.T."/>
            <person name="Donnenberg M.S."/>
            <person name="Blattner F.R."/>
        </authorList>
    </citation>
    <scope>NUCLEOTIDE SEQUENCE [LARGE SCALE GENOMIC DNA]</scope>
    <source>
        <strain>CFT073 / ATCC 700928 / UPEC</strain>
    </source>
</reference>
<protein>
    <recommendedName>
        <fullName>Citrate synthase</fullName>
        <ecNumber>2.3.3.16</ecNumber>
    </recommendedName>
</protein>
<feature type="chain" id="PRO_0000169944" description="Citrate synthase">
    <location>
        <begin position="1"/>
        <end position="427"/>
    </location>
</feature>
<feature type="active site" evidence="2">
    <location>
        <position position="306"/>
    </location>
</feature>
<feature type="active site" evidence="2">
    <location>
        <position position="363"/>
    </location>
</feature>
<feature type="modified residue" description="N6-acetyllysine" evidence="1">
    <location>
        <position position="283"/>
    </location>
</feature>
<keyword id="KW-0007">Acetylation</keyword>
<keyword id="KW-0021">Allosteric enzyme</keyword>
<keyword id="KW-1185">Reference proteome</keyword>
<keyword id="KW-0808">Transferase</keyword>
<keyword id="KW-0816">Tricarboxylic acid cycle</keyword>
<gene>
    <name type="primary">gltA</name>
    <name type="ordered locus">c0796</name>
</gene>
<name>CISY_ECOL6</name>
<dbReference type="EC" id="2.3.3.16"/>
<dbReference type="EMBL" id="AE014075">
    <property type="protein sequence ID" value="AAN79269.1"/>
    <property type="molecule type" value="Genomic_DNA"/>
</dbReference>
<dbReference type="RefSeq" id="WP_000785834.1">
    <property type="nucleotide sequence ID" value="NZ_CP051263.1"/>
</dbReference>
<dbReference type="SMR" id="P0ABH8"/>
<dbReference type="STRING" id="199310.c0796"/>
<dbReference type="GeneID" id="93776765"/>
<dbReference type="KEGG" id="ecc:c0796"/>
<dbReference type="eggNOG" id="COG0372">
    <property type="taxonomic scope" value="Bacteria"/>
</dbReference>
<dbReference type="HOGENOM" id="CLU_025068_0_0_6"/>
<dbReference type="BioCyc" id="ECOL199310:C0796-MONOMER"/>
<dbReference type="UniPathway" id="UPA00223">
    <property type="reaction ID" value="UER00717"/>
</dbReference>
<dbReference type="Proteomes" id="UP000001410">
    <property type="component" value="Chromosome"/>
</dbReference>
<dbReference type="GO" id="GO:0005737">
    <property type="term" value="C:cytoplasm"/>
    <property type="evidence" value="ECO:0007669"/>
    <property type="project" value="InterPro"/>
</dbReference>
<dbReference type="GO" id="GO:0004108">
    <property type="term" value="F:citrate (Si)-synthase activity"/>
    <property type="evidence" value="ECO:0007669"/>
    <property type="project" value="InterPro"/>
</dbReference>
<dbReference type="GO" id="GO:0006099">
    <property type="term" value="P:tricarboxylic acid cycle"/>
    <property type="evidence" value="ECO:0007669"/>
    <property type="project" value="UniProtKB-UniPathway"/>
</dbReference>
<dbReference type="CDD" id="cd06114">
    <property type="entry name" value="EcCS_like"/>
    <property type="match status" value="1"/>
</dbReference>
<dbReference type="FunFam" id="1.10.230.10:FF:000002">
    <property type="entry name" value="Citrate synthase"/>
    <property type="match status" value="1"/>
</dbReference>
<dbReference type="FunFam" id="1.10.580.10:FF:000002">
    <property type="entry name" value="Citrate synthase"/>
    <property type="match status" value="1"/>
</dbReference>
<dbReference type="FunFam" id="2.20.28.60:FF:000001">
    <property type="entry name" value="Citrate synthase"/>
    <property type="match status" value="1"/>
</dbReference>
<dbReference type="Gene3D" id="2.20.28.60">
    <property type="match status" value="1"/>
</dbReference>
<dbReference type="Gene3D" id="1.10.580.10">
    <property type="entry name" value="Citrate Synthase, domain 1"/>
    <property type="match status" value="1"/>
</dbReference>
<dbReference type="Gene3D" id="1.10.230.10">
    <property type="entry name" value="Cytochrome P450-Terp, domain 2"/>
    <property type="match status" value="1"/>
</dbReference>
<dbReference type="InterPro" id="IPR016142">
    <property type="entry name" value="Citrate_synth-like_lrg_a-sub"/>
</dbReference>
<dbReference type="InterPro" id="IPR016143">
    <property type="entry name" value="Citrate_synth-like_sm_a-sub"/>
</dbReference>
<dbReference type="InterPro" id="IPR002020">
    <property type="entry name" value="Citrate_synthase"/>
</dbReference>
<dbReference type="InterPro" id="IPR019810">
    <property type="entry name" value="Citrate_synthase_AS"/>
</dbReference>
<dbReference type="InterPro" id="IPR024176">
    <property type="entry name" value="Citrate_synthase_bac-typ"/>
</dbReference>
<dbReference type="InterPro" id="IPR036969">
    <property type="entry name" value="Citrate_synthase_sf"/>
</dbReference>
<dbReference type="InterPro" id="IPR010953">
    <property type="entry name" value="Citrate_synthase_typ-I"/>
</dbReference>
<dbReference type="NCBIfam" id="TIGR01798">
    <property type="entry name" value="cit_synth_I"/>
    <property type="match status" value="1"/>
</dbReference>
<dbReference type="NCBIfam" id="NF004126">
    <property type="entry name" value="PRK05614.1"/>
    <property type="match status" value="1"/>
</dbReference>
<dbReference type="PANTHER" id="PTHR42871">
    <property type="entry name" value="CITRATE SYNTHASE"/>
    <property type="match status" value="1"/>
</dbReference>
<dbReference type="PANTHER" id="PTHR42871:SF1">
    <property type="entry name" value="CITRATE SYNTHASE"/>
    <property type="match status" value="1"/>
</dbReference>
<dbReference type="Pfam" id="PF00285">
    <property type="entry name" value="Citrate_synt"/>
    <property type="match status" value="1"/>
</dbReference>
<dbReference type="PIRSF" id="PIRSF001369">
    <property type="entry name" value="Citrate_synth"/>
    <property type="match status" value="1"/>
</dbReference>
<dbReference type="PRINTS" id="PR00143">
    <property type="entry name" value="CITRTSNTHASE"/>
</dbReference>
<dbReference type="SUPFAM" id="SSF48256">
    <property type="entry name" value="Citrate synthase"/>
    <property type="match status" value="1"/>
</dbReference>
<dbReference type="PROSITE" id="PS00480">
    <property type="entry name" value="CITRATE_SYNTHASE"/>
    <property type="match status" value="1"/>
</dbReference>